<sequence length="232" mass="25829">MGQKVHPNGIRLGIVKAWNSTWYANTKEFADNLDSDFKVRQFLTKELAKASVSRIVIERPAKSIRVTIHTARPGIVIGKKGEDVEKLRKVVADIAGVPAQINIAEVRKPELDAKLVADSITSQLERRVMFRRAMKRAVQNAMRLGAKGIKVEVSGRLGGAEIARTEWYREGRVPLHTLRADIDYNTSEAHTTYGVIGVKVWIFKGEILGGMAAVEQPEPAAQPKKQQRKGRK</sequence>
<dbReference type="EMBL" id="CP000305">
    <property type="protein sequence ID" value="ABG20180.1"/>
    <property type="molecule type" value="Genomic_DNA"/>
</dbReference>
<dbReference type="EMBL" id="ACNQ01000019">
    <property type="protein sequence ID" value="EEO74768.1"/>
    <property type="molecule type" value="Genomic_DNA"/>
</dbReference>
<dbReference type="RefSeq" id="WP_002221644.1">
    <property type="nucleotide sequence ID" value="NZ_ACNQ01000019.1"/>
</dbReference>
<dbReference type="SMR" id="Q1CCV0"/>
<dbReference type="GeneID" id="97454237"/>
<dbReference type="KEGG" id="ypn:YPN_3853"/>
<dbReference type="HOGENOM" id="CLU_058591_0_2_6"/>
<dbReference type="Proteomes" id="UP000008936">
    <property type="component" value="Chromosome"/>
</dbReference>
<dbReference type="GO" id="GO:0022627">
    <property type="term" value="C:cytosolic small ribosomal subunit"/>
    <property type="evidence" value="ECO:0007669"/>
    <property type="project" value="TreeGrafter"/>
</dbReference>
<dbReference type="GO" id="GO:0003729">
    <property type="term" value="F:mRNA binding"/>
    <property type="evidence" value="ECO:0007669"/>
    <property type="project" value="UniProtKB-UniRule"/>
</dbReference>
<dbReference type="GO" id="GO:0019843">
    <property type="term" value="F:rRNA binding"/>
    <property type="evidence" value="ECO:0007669"/>
    <property type="project" value="UniProtKB-UniRule"/>
</dbReference>
<dbReference type="GO" id="GO:0003735">
    <property type="term" value="F:structural constituent of ribosome"/>
    <property type="evidence" value="ECO:0007669"/>
    <property type="project" value="InterPro"/>
</dbReference>
<dbReference type="GO" id="GO:0006412">
    <property type="term" value="P:translation"/>
    <property type="evidence" value="ECO:0007669"/>
    <property type="project" value="UniProtKB-UniRule"/>
</dbReference>
<dbReference type="CDD" id="cd02412">
    <property type="entry name" value="KH-II_30S_S3"/>
    <property type="match status" value="1"/>
</dbReference>
<dbReference type="FunFam" id="3.30.1140.32:FF:000001">
    <property type="entry name" value="30S ribosomal protein S3"/>
    <property type="match status" value="1"/>
</dbReference>
<dbReference type="FunFam" id="3.30.300.20:FF:000001">
    <property type="entry name" value="30S ribosomal protein S3"/>
    <property type="match status" value="1"/>
</dbReference>
<dbReference type="Gene3D" id="3.30.300.20">
    <property type="match status" value="1"/>
</dbReference>
<dbReference type="Gene3D" id="3.30.1140.32">
    <property type="entry name" value="Ribosomal protein S3, C-terminal domain"/>
    <property type="match status" value="1"/>
</dbReference>
<dbReference type="HAMAP" id="MF_01309_B">
    <property type="entry name" value="Ribosomal_uS3_B"/>
    <property type="match status" value="1"/>
</dbReference>
<dbReference type="InterPro" id="IPR004087">
    <property type="entry name" value="KH_dom"/>
</dbReference>
<dbReference type="InterPro" id="IPR015946">
    <property type="entry name" value="KH_dom-like_a/b"/>
</dbReference>
<dbReference type="InterPro" id="IPR004044">
    <property type="entry name" value="KH_dom_type_2"/>
</dbReference>
<dbReference type="InterPro" id="IPR009019">
    <property type="entry name" value="KH_sf_prok-type"/>
</dbReference>
<dbReference type="InterPro" id="IPR036419">
    <property type="entry name" value="Ribosomal_S3_C_sf"/>
</dbReference>
<dbReference type="InterPro" id="IPR005704">
    <property type="entry name" value="Ribosomal_uS3_bac-typ"/>
</dbReference>
<dbReference type="InterPro" id="IPR001351">
    <property type="entry name" value="Ribosomal_uS3_C"/>
</dbReference>
<dbReference type="InterPro" id="IPR018280">
    <property type="entry name" value="Ribosomal_uS3_CS"/>
</dbReference>
<dbReference type="NCBIfam" id="TIGR01009">
    <property type="entry name" value="rpsC_bact"/>
    <property type="match status" value="1"/>
</dbReference>
<dbReference type="PANTHER" id="PTHR11760">
    <property type="entry name" value="30S/40S RIBOSOMAL PROTEIN S3"/>
    <property type="match status" value="1"/>
</dbReference>
<dbReference type="PANTHER" id="PTHR11760:SF19">
    <property type="entry name" value="SMALL RIBOSOMAL SUBUNIT PROTEIN US3C"/>
    <property type="match status" value="1"/>
</dbReference>
<dbReference type="Pfam" id="PF07650">
    <property type="entry name" value="KH_2"/>
    <property type="match status" value="1"/>
</dbReference>
<dbReference type="Pfam" id="PF00189">
    <property type="entry name" value="Ribosomal_S3_C"/>
    <property type="match status" value="1"/>
</dbReference>
<dbReference type="SMART" id="SM00322">
    <property type="entry name" value="KH"/>
    <property type="match status" value="1"/>
</dbReference>
<dbReference type="SUPFAM" id="SSF54814">
    <property type="entry name" value="Prokaryotic type KH domain (KH-domain type II)"/>
    <property type="match status" value="1"/>
</dbReference>
<dbReference type="SUPFAM" id="SSF54821">
    <property type="entry name" value="Ribosomal protein S3 C-terminal domain"/>
    <property type="match status" value="1"/>
</dbReference>
<dbReference type="PROSITE" id="PS50823">
    <property type="entry name" value="KH_TYPE_2"/>
    <property type="match status" value="1"/>
</dbReference>
<dbReference type="PROSITE" id="PS00548">
    <property type="entry name" value="RIBOSOMAL_S3"/>
    <property type="match status" value="1"/>
</dbReference>
<protein>
    <recommendedName>
        <fullName evidence="1">Small ribosomal subunit protein uS3</fullName>
    </recommendedName>
    <alternativeName>
        <fullName evidence="2">30S ribosomal protein S3</fullName>
    </alternativeName>
</protein>
<organism>
    <name type="scientific">Yersinia pestis bv. Antiqua (strain Nepal516)</name>
    <dbReference type="NCBI Taxonomy" id="377628"/>
    <lineage>
        <taxon>Bacteria</taxon>
        <taxon>Pseudomonadati</taxon>
        <taxon>Pseudomonadota</taxon>
        <taxon>Gammaproteobacteria</taxon>
        <taxon>Enterobacterales</taxon>
        <taxon>Yersiniaceae</taxon>
        <taxon>Yersinia</taxon>
    </lineage>
</organism>
<reference key="1">
    <citation type="journal article" date="2006" name="J. Bacteriol.">
        <title>Complete genome sequence of Yersinia pestis strains Antiqua and Nepal516: evidence of gene reduction in an emerging pathogen.</title>
        <authorList>
            <person name="Chain P.S.G."/>
            <person name="Hu P."/>
            <person name="Malfatti S.A."/>
            <person name="Radnedge L."/>
            <person name="Larimer F."/>
            <person name="Vergez L.M."/>
            <person name="Worsham P."/>
            <person name="Chu M.C."/>
            <person name="Andersen G.L."/>
        </authorList>
    </citation>
    <scope>NUCLEOTIDE SEQUENCE [LARGE SCALE GENOMIC DNA]</scope>
    <source>
        <strain>Nepal516</strain>
    </source>
</reference>
<reference key="2">
    <citation type="submission" date="2009-04" db="EMBL/GenBank/DDBJ databases">
        <title>Yersinia pestis Nepal516A whole genome shotgun sequencing project.</title>
        <authorList>
            <person name="Plunkett G. III"/>
            <person name="Anderson B.D."/>
            <person name="Baumler D.J."/>
            <person name="Burland V."/>
            <person name="Cabot E.L."/>
            <person name="Glasner J.D."/>
            <person name="Mau B."/>
            <person name="Neeno-Eckwall E."/>
            <person name="Perna N.T."/>
            <person name="Munk A.C."/>
            <person name="Tapia R."/>
            <person name="Green L.D."/>
            <person name="Rogers Y.C."/>
            <person name="Detter J.C."/>
            <person name="Bruce D.C."/>
            <person name="Brettin T.S."/>
        </authorList>
    </citation>
    <scope>NUCLEOTIDE SEQUENCE [LARGE SCALE GENOMIC DNA]</scope>
    <source>
        <strain>Nepal516</strain>
    </source>
</reference>
<accession>Q1CCV0</accession>
<accession>D1Q2L5</accession>
<proteinExistence type="inferred from homology"/>
<gene>
    <name evidence="1" type="primary">rpsC</name>
    <name type="ordered locus">YPN_3853</name>
    <name type="ORF">YP516_4376</name>
</gene>
<name>RS3_YERPN</name>
<evidence type="ECO:0000255" key="1">
    <source>
        <dbReference type="HAMAP-Rule" id="MF_01309"/>
    </source>
</evidence>
<evidence type="ECO:0000305" key="2"/>
<feature type="chain" id="PRO_0000293917" description="Small ribosomal subunit protein uS3">
    <location>
        <begin position="1"/>
        <end position="232"/>
    </location>
</feature>
<feature type="domain" description="KH type-2" evidence="1">
    <location>
        <begin position="39"/>
        <end position="107"/>
    </location>
</feature>
<comment type="function">
    <text evidence="1">Binds the lower part of the 30S subunit head. Binds mRNA in the 70S ribosome, positioning it for translation.</text>
</comment>
<comment type="subunit">
    <text evidence="1">Part of the 30S ribosomal subunit. Forms a tight complex with proteins S10 and S14.</text>
</comment>
<comment type="similarity">
    <text evidence="1">Belongs to the universal ribosomal protein uS3 family.</text>
</comment>
<keyword id="KW-0687">Ribonucleoprotein</keyword>
<keyword id="KW-0689">Ribosomal protein</keyword>
<keyword id="KW-0694">RNA-binding</keyword>
<keyword id="KW-0699">rRNA-binding</keyword>